<keyword id="KW-0106">Calcium</keyword>
<keyword id="KW-0112">Calmodulin-binding</keyword>
<keyword id="KW-0963">Cytoplasm</keyword>
<keyword id="KW-0274">FAD</keyword>
<keyword id="KW-0285">Flavoprotein</keyword>
<keyword id="KW-0288">FMN</keyword>
<keyword id="KW-0349">Heme</keyword>
<keyword id="KW-0408">Iron</keyword>
<keyword id="KW-0479">Metal-binding</keyword>
<keyword id="KW-0521">NADP</keyword>
<keyword id="KW-0560">Oxidoreductase</keyword>
<keyword id="KW-0597">Phosphoprotein</keyword>
<keyword id="KW-1185">Reference proteome</keyword>
<keyword id="KW-0832">Ubl conjugation</keyword>
<keyword id="KW-0862">Zinc</keyword>
<sequence length="1154" mass="131847">MACPWKFLFRAKFHQYGMKEEKDINNNVEKPPGATPSPSTQDDLKNHKHHNDSPQPLTETVQKLPESLDKLHATPLSRPQHVRIKNWGNGMTFQDTLHHKAKGDLACKSKSCLGAIMNPKSLTREPRDKPTPPDELLPQAIEFVNQYYSSFKEAKIEEHLARVEAVTKEIETTGTYQLTGDELIFATKQAWRNAPRCIGRIQWSNLQVFDARSCSTAKEMFEHICRHLRYASNNGNIRSAITVFPQRTDGKHDFRVWNAQLIRYAGYQMPDGTILGDPASVEFTQLCIDLGWKPKYGRFDVVPLVLQADGQDPEFFEIPPDLVLEVPMEHPKYEWFRELELKWYALPAVANMLLEVGGLEFPGCPFNGWYMGTEIGVRDFCDVQRYNILEEVGRRMGLETHKLASLWKDRAVIEINVAVLHSFQKQNVTIMDHHSAAESFMKYMQSEYRSRGGCPADWIWLVPPISGSITPVFHQEMLNYVLSPFYYYQVEAWKTHVWQDEKRRPQRRKIQLKVLVKAVLFASMLMRKTMASRVRVTILFATETGKSETLARDLGALFSCAFHPKVLCMDEYKLSHLEEEQLLLVVTSTFGNGDSPGNGEKLKKSLFMLKELTNKFRYAVFGLGSSMYPQFCAFAHDIDHKLSHLGASQLTPGGEGDELNGKEEAFRCWAVQTFKAACDTSDVRGKHCIQIPRLYTSNVTWDPHHYRLLQDSQPLDLNKALSKMHAKNVFTLRLKSQRNLQSPISNRTTLQVELSCEDSQELSYLPGEHLGVFPGNQLALVQGILERVVYSPAPLQPVHLETLSERGSYWVRNNRLPPCSLSQALTYFLDITTPPTHLLLRKLAQLAHQYAERHRLEILCHPSEYNKWKLTNSPTFLEVLEEFPSLRVSAGFLLSQLPILKPRYYSISSSRDCTPMEVHLTVAVLVYPTRDGQGPLHHGVCSTWLSNLKPQDPVPCFVRSAGNFKLPEDPSRPCILIGPGTGIAPFRSFWQQRLHDIKHKGLRGSRMTLVFGCRRPDEDHLYREEMLEMAQSGVLHEVHTAYSRLPGQPKVYVQDILRQQLASQVLRMLHEEQGHLYVCGDVRMARDVAHTLKHLVAAKLSLSEEQVEDYFFQLKSQKRYHEDIFGAVFPYEVKKDGAAKQPSDPRVPAAHGRS</sequence>
<name>NOS2_CANLF</name>
<proteinExistence type="evidence at transcript level"/>
<gene>
    <name type="primary">NOS2</name>
</gene>
<reference key="1">
    <citation type="journal article" date="1998" name="Am. J. Physiol.">
        <title>Induction and cDNA sequence of inducible nitric oxide synthase from canine aortic smooth muscle cells.</title>
        <authorList>
            <person name="Wang X."/>
            <person name="McGregor C.G.A."/>
            <person name="Miller V.M."/>
        </authorList>
    </citation>
    <scope>NUCLEOTIDE SEQUENCE [MRNA]</scope>
    <source>
        <tissue>Aorta</tissue>
    </source>
</reference>
<reference key="2">
    <citation type="submission" date="1997-11" db="EMBL/GenBank/DDBJ databases">
        <title>The canine inducible NO synthase.</title>
        <authorList>
            <person name="Haerter L."/>
            <person name="Straubinger R.K."/>
            <person name="Appel M.J.G."/>
        </authorList>
    </citation>
    <scope>NUCLEOTIDE SEQUENCE [MRNA] OF 42-632</scope>
    <source>
        <tissue>Alveolar macrophage</tissue>
    </source>
</reference>
<organism>
    <name type="scientific">Canis lupus familiaris</name>
    <name type="common">Dog</name>
    <name type="synonym">Canis familiaris</name>
    <dbReference type="NCBI Taxonomy" id="9615"/>
    <lineage>
        <taxon>Eukaryota</taxon>
        <taxon>Metazoa</taxon>
        <taxon>Chordata</taxon>
        <taxon>Craniata</taxon>
        <taxon>Vertebrata</taxon>
        <taxon>Euteleostomi</taxon>
        <taxon>Mammalia</taxon>
        <taxon>Eutheria</taxon>
        <taxon>Laurasiatheria</taxon>
        <taxon>Carnivora</taxon>
        <taxon>Caniformia</taxon>
        <taxon>Canidae</taxon>
        <taxon>Canis</taxon>
    </lineage>
</organism>
<feature type="chain" id="PRO_0000170927" description="Nitric oxide synthase, inducible">
    <location>
        <begin position="1"/>
        <end position="1154"/>
    </location>
</feature>
<feature type="domain" description="Flavodoxin-like" evidence="8">
    <location>
        <begin position="536"/>
        <end position="674"/>
    </location>
</feature>
<feature type="domain" description="FAD-binding FR-type" evidence="9">
    <location>
        <begin position="727"/>
        <end position="967"/>
    </location>
</feature>
<feature type="region of interest" description="Disordered" evidence="10">
    <location>
        <begin position="22"/>
        <end position="58"/>
    </location>
</feature>
<feature type="region of interest" description="Calmodulin-binding" evidence="5">
    <location>
        <begin position="512"/>
        <end position="532"/>
    </location>
</feature>
<feature type="short sequence motif" description="DINNN-motif; mediates interaction with SPSB1, SPSB2 and SPSB4" evidence="5">
    <location>
        <begin position="23"/>
        <end position="27"/>
    </location>
</feature>
<feature type="binding site" evidence="5">
    <location>
        <position position="107"/>
    </location>
    <ligand>
        <name>Zn(2+)</name>
        <dbReference type="ChEBI" id="CHEBI:29105"/>
        <note>ligand shared between homodimeric partners</note>
    </ligand>
</feature>
<feature type="binding site" evidence="5">
    <location>
        <position position="112"/>
    </location>
    <ligand>
        <name>Zn(2+)</name>
        <dbReference type="ChEBI" id="CHEBI:29105"/>
        <note>ligand shared between homodimeric partners</note>
    </ligand>
</feature>
<feature type="binding site" description="axial binding residue" evidence="2">
    <location>
        <position position="197"/>
    </location>
    <ligand>
        <name>heme b</name>
        <dbReference type="ChEBI" id="CHEBI:60344"/>
    </ligand>
    <ligandPart>
        <name>Fe</name>
        <dbReference type="ChEBI" id="CHEBI:18248"/>
    </ligandPart>
</feature>
<feature type="binding site" evidence="2">
    <location>
        <position position="260"/>
    </location>
    <ligand>
        <name>L-arginine</name>
        <dbReference type="ChEBI" id="CHEBI:32682"/>
    </ligand>
</feature>
<feature type="binding site" evidence="2">
    <location>
        <position position="369"/>
    </location>
    <ligand>
        <name>L-arginine</name>
        <dbReference type="ChEBI" id="CHEBI:32682"/>
    </ligand>
</feature>
<feature type="binding site" evidence="2">
    <location>
        <position position="370"/>
    </location>
    <ligand>
        <name>L-arginine</name>
        <dbReference type="ChEBI" id="CHEBI:32682"/>
    </ligand>
</feature>
<feature type="binding site" evidence="2">
    <location>
        <position position="374"/>
    </location>
    <ligand>
        <name>L-arginine</name>
        <dbReference type="ChEBI" id="CHEBI:32682"/>
    </ligand>
</feature>
<feature type="binding site" evidence="5">
    <location>
        <position position="378"/>
    </location>
    <ligand>
        <name>(6R)-L-erythro-5,6,7,8-tetrahydrobiopterin</name>
        <dbReference type="ChEBI" id="CHEBI:59560"/>
    </ligand>
</feature>
<feature type="binding site" evidence="5">
    <location>
        <position position="459"/>
    </location>
    <ligand>
        <name>(6R)-L-erythro-5,6,7,8-tetrahydrobiopterin</name>
        <dbReference type="ChEBI" id="CHEBI:59560"/>
    </ligand>
</feature>
<feature type="binding site" evidence="2">
    <location>
        <position position="460"/>
    </location>
    <ligand>
        <name>(6R)-L-erythro-5,6,7,8-tetrahydrobiopterin</name>
        <dbReference type="ChEBI" id="CHEBI:59560"/>
    </ligand>
</feature>
<feature type="binding site" evidence="2">
    <location>
        <position position="473"/>
    </location>
    <ligand>
        <name>(6R)-L-erythro-5,6,7,8-tetrahydrobiopterin</name>
        <dbReference type="ChEBI" id="CHEBI:59560"/>
    </ligand>
</feature>
<feature type="binding site" evidence="2">
    <location>
        <position position="488"/>
    </location>
    <ligand>
        <name>heme b</name>
        <dbReference type="ChEBI" id="CHEBI:60344"/>
    </ligand>
</feature>
<feature type="binding site" evidence="5">
    <location>
        <position position="542"/>
    </location>
    <ligand>
        <name>FMN</name>
        <dbReference type="ChEBI" id="CHEBI:58210"/>
    </ligand>
</feature>
<feature type="binding site" evidence="5">
    <location>
        <position position="543"/>
    </location>
    <ligand>
        <name>FMN</name>
        <dbReference type="ChEBI" id="CHEBI:58210"/>
    </ligand>
</feature>
<feature type="binding site" evidence="5">
    <location>
        <position position="544"/>
    </location>
    <ligand>
        <name>FMN</name>
        <dbReference type="ChEBI" id="CHEBI:58210"/>
    </ligand>
</feature>
<feature type="binding site" evidence="5">
    <location>
        <position position="546"/>
    </location>
    <ligand>
        <name>FMN</name>
        <dbReference type="ChEBI" id="CHEBI:58210"/>
    </ligand>
</feature>
<feature type="binding site" evidence="5">
    <location>
        <position position="547"/>
    </location>
    <ligand>
        <name>FMN</name>
        <dbReference type="ChEBI" id="CHEBI:58210"/>
    </ligand>
</feature>
<feature type="binding site" evidence="5">
    <location>
        <position position="588"/>
    </location>
    <ligand>
        <name>FMN</name>
        <dbReference type="ChEBI" id="CHEBI:58210"/>
    </ligand>
</feature>
<feature type="binding site" evidence="5">
    <location>
        <position position="589"/>
    </location>
    <ligand>
        <name>FMN</name>
        <dbReference type="ChEBI" id="CHEBI:58210"/>
    </ligand>
</feature>
<feature type="binding site" evidence="5">
    <location>
        <position position="625"/>
    </location>
    <ligand>
        <name>FMN</name>
        <dbReference type="ChEBI" id="CHEBI:58210"/>
    </ligand>
</feature>
<feature type="binding site" evidence="5">
    <location>
        <position position="632"/>
    </location>
    <ligand>
        <name>FMN</name>
        <dbReference type="ChEBI" id="CHEBI:58210"/>
    </ligand>
</feature>
<feature type="binding site" evidence="5">
    <location>
        <position position="658"/>
    </location>
    <ligand>
        <name>FMN</name>
        <dbReference type="ChEBI" id="CHEBI:58210"/>
    </ligand>
</feature>
<feature type="binding site" evidence="3">
    <location>
        <position position="747"/>
    </location>
    <ligand>
        <name>NADP(+)</name>
        <dbReference type="ChEBI" id="CHEBI:58349"/>
    </ligand>
</feature>
<feature type="binding site" evidence="3">
    <location>
        <position position="769"/>
    </location>
    <ligand>
        <name>FAD</name>
        <dbReference type="ChEBI" id="CHEBI:57692"/>
    </ligand>
</feature>
<feature type="binding site" evidence="3">
    <location>
        <position position="903"/>
    </location>
    <ligand>
        <name>FAD</name>
        <dbReference type="ChEBI" id="CHEBI:57692"/>
    </ligand>
</feature>
<feature type="binding site" evidence="3">
    <location>
        <position position="905"/>
    </location>
    <ligand>
        <name>FAD</name>
        <dbReference type="ChEBI" id="CHEBI:57692"/>
    </ligand>
</feature>
<feature type="binding site" evidence="3">
    <location>
        <position position="906"/>
    </location>
    <ligand>
        <name>FAD</name>
        <dbReference type="ChEBI" id="CHEBI:57692"/>
    </ligand>
</feature>
<feature type="binding site" evidence="3">
    <location>
        <position position="921"/>
    </location>
    <ligand>
        <name>FAD</name>
        <dbReference type="ChEBI" id="CHEBI:57692"/>
    </ligand>
</feature>
<feature type="binding site" evidence="3">
    <location>
        <position position="923"/>
    </location>
    <ligand>
        <name>FAD</name>
        <dbReference type="ChEBI" id="CHEBI:57692"/>
    </ligand>
</feature>
<feature type="binding site" evidence="3">
    <location>
        <position position="927"/>
    </location>
    <ligand>
        <name>FAD</name>
        <dbReference type="ChEBI" id="CHEBI:57692"/>
    </ligand>
</feature>
<feature type="binding site" evidence="3">
    <location>
        <position position="940"/>
    </location>
    <ligand>
        <name>FAD</name>
        <dbReference type="ChEBI" id="CHEBI:57692"/>
    </ligand>
</feature>
<feature type="binding site" evidence="3">
    <location>
        <position position="941"/>
    </location>
    <ligand>
        <name>FAD</name>
        <dbReference type="ChEBI" id="CHEBI:57692"/>
    </ligand>
</feature>
<feature type="binding site" evidence="3">
    <location>
        <position position="942"/>
    </location>
    <ligand>
        <name>FAD</name>
        <dbReference type="ChEBI" id="CHEBI:57692"/>
    </ligand>
</feature>
<feature type="binding site" evidence="3">
    <location>
        <position position="981"/>
    </location>
    <ligand>
        <name>NADP(+)</name>
        <dbReference type="ChEBI" id="CHEBI:58349"/>
    </ligand>
</feature>
<feature type="binding site" evidence="3">
    <location>
        <position position="1014"/>
    </location>
    <ligand>
        <name>NADP(+)</name>
        <dbReference type="ChEBI" id="CHEBI:58349"/>
    </ligand>
</feature>
<feature type="binding site" evidence="3">
    <location>
        <position position="1043"/>
    </location>
    <ligand>
        <name>NADP(+)</name>
        <dbReference type="ChEBI" id="CHEBI:58349"/>
    </ligand>
</feature>
<feature type="binding site" evidence="3">
    <location>
        <position position="1044"/>
    </location>
    <ligand>
        <name>NADP(+)</name>
        <dbReference type="ChEBI" id="CHEBI:58349"/>
    </ligand>
</feature>
<feature type="binding site" evidence="3">
    <location>
        <position position="1050"/>
    </location>
    <ligand>
        <name>NADP(+)</name>
        <dbReference type="ChEBI" id="CHEBI:58349"/>
    </ligand>
</feature>
<feature type="binding site" evidence="3">
    <location>
        <position position="1052"/>
    </location>
    <ligand>
        <name>NADP(+)</name>
        <dbReference type="ChEBI" id="CHEBI:58349"/>
    </ligand>
</feature>
<feature type="binding site" evidence="3">
    <location>
        <position position="1054"/>
    </location>
    <ligand>
        <name>NADP(+)</name>
        <dbReference type="ChEBI" id="CHEBI:58349"/>
    </ligand>
</feature>
<feature type="binding site" evidence="3">
    <location>
        <position position="1087"/>
    </location>
    <ligand>
        <name>NADP(+)</name>
        <dbReference type="ChEBI" id="CHEBI:58349"/>
    </ligand>
</feature>
<feature type="modified residue" description="Phosphotyrosine" evidence="7">
    <location>
        <position position="572"/>
    </location>
</feature>
<feature type="sequence conflict" description="In Ref. 2." evidence="11" ref="2">
    <original>DDLKNHKHHND</original>
    <variation>KCHSLSKHRDE</variation>
    <location>
        <begin position="42"/>
        <end position="52"/>
    </location>
</feature>
<feature type="sequence conflict" description="In Ref. 2; AAC15587." evidence="11" ref="2">
    <original>P</original>
    <variation>S</variation>
    <location>
        <position position="56"/>
    </location>
</feature>
<feature type="sequence conflict" description="In Ref. 2; AAC15587." evidence="11" ref="2">
    <original>ETVQKL</original>
    <variation>GTVKTS</variation>
    <location>
        <begin position="59"/>
        <end position="64"/>
    </location>
</feature>
<feature type="sequence conflict" description="In Ref. 2." evidence="11" ref="2">
    <original>LDKLHATPLSRPQ</original>
    <variation>TIKPAAPPLACPR</variation>
    <location>
        <begin position="68"/>
        <end position="80"/>
    </location>
</feature>
<feature type="sequence conflict" description="In Ref. 1; AAC78630." evidence="11" ref="1">
    <original>MT</original>
    <variation>RS</variation>
    <location>
        <begin position="91"/>
        <end position="92"/>
    </location>
</feature>
<feature type="sequence conflict" description="In Ref. 1; AAC78630." evidence="11" ref="1">
    <original>KGD</original>
    <variation>MGV</variation>
    <location>
        <begin position="102"/>
        <end position="104"/>
    </location>
</feature>
<feature type="sequence conflict" description="In Ref. 1; AAC78630." evidence="11" ref="1">
    <original>K</original>
    <variation>T</variation>
    <location>
        <position position="108"/>
    </location>
</feature>
<feature type="sequence conflict" description="In Ref. 1; AAC78630." evidence="11" ref="1">
    <original>SCLGA</original>
    <variation>LCMGS</variation>
    <location>
        <begin position="111"/>
        <end position="115"/>
    </location>
</feature>
<feature type="sequence conflict" description="In Ref. 1; AAC78630." evidence="11" ref="1">
    <original>P</original>
    <variation>T</variation>
    <location>
        <position position="119"/>
    </location>
</feature>
<feature type="sequence conflict" description="In Ref. 1; AAC78630." evidence="11" ref="1">
    <original>EPR</original>
    <variation>GPS</variation>
    <location>
        <begin position="125"/>
        <end position="127"/>
    </location>
</feature>
<feature type="sequence conflict" description="In Ref. 1; AAC78630." evidence="11" ref="1">
    <original>PD</original>
    <variation>TE</variation>
    <location>
        <begin position="133"/>
        <end position="134"/>
    </location>
</feature>
<feature type="sequence conflict" description="In Ref. 1; AAC78630." evidence="11" ref="1">
    <original>S</original>
    <variation>G</variation>
    <location>
        <position position="149"/>
    </location>
</feature>
<feature type="sequence conflict" description="In Ref. 1; AAC78630." evidence="11" ref="1">
    <original>E</original>
    <variation>D</variation>
    <location>
        <position position="169"/>
    </location>
</feature>
<feature type="sequence conflict" description="In Ref. 1; AAC78630." evidence="11" ref="1">
    <original>RR</original>
    <variation>SK</variation>
    <location>
        <begin position="394"/>
        <end position="395"/>
    </location>
</feature>
<feature type="sequence conflict" description="In Ref. 1; AAC78630." evidence="11" ref="1">
    <original>VWQ</original>
    <variation>LWL</variation>
    <location>
        <begin position="497"/>
        <end position="499"/>
    </location>
</feature>
<feature type="sequence conflict" description="In Ref. 1; AAC78630." evidence="11" ref="1">
    <original>QRR</original>
    <variation>HRK</variation>
    <location>
        <begin position="506"/>
        <end position="508"/>
    </location>
</feature>
<feature type="sequence conflict" description="In Ref. 1; AAC78630." evidence="11" ref="1">
    <original>K</original>
    <variation>N</variation>
    <location>
        <position position="615"/>
    </location>
</feature>
<feature type="sequence conflict" description="In Ref. 1; AAC78630." evidence="11" ref="1">
    <original>GSS</original>
    <variation>RSN</variation>
    <location>
        <begin position="624"/>
        <end position="626"/>
    </location>
</feature>
<evidence type="ECO:0000250" key="1"/>
<evidence type="ECO:0000250" key="2">
    <source>
        <dbReference type="UniProtKB" id="P29474"/>
    </source>
</evidence>
<evidence type="ECO:0000250" key="3">
    <source>
        <dbReference type="UniProtKB" id="P29476"/>
    </source>
</evidence>
<evidence type="ECO:0000250" key="4">
    <source>
        <dbReference type="UniProtKB" id="P29477"/>
    </source>
</evidence>
<evidence type="ECO:0000250" key="5">
    <source>
        <dbReference type="UniProtKB" id="P35228"/>
    </source>
</evidence>
<evidence type="ECO:0000250" key="6">
    <source>
        <dbReference type="UniProtKB" id="P79290"/>
    </source>
</evidence>
<evidence type="ECO:0000250" key="7">
    <source>
        <dbReference type="UniProtKB" id="Q06518"/>
    </source>
</evidence>
<evidence type="ECO:0000255" key="8">
    <source>
        <dbReference type="PROSITE-ProRule" id="PRU00088"/>
    </source>
</evidence>
<evidence type="ECO:0000255" key="9">
    <source>
        <dbReference type="PROSITE-ProRule" id="PRU00716"/>
    </source>
</evidence>
<evidence type="ECO:0000256" key="10">
    <source>
        <dbReference type="SAM" id="MobiDB-lite"/>
    </source>
</evidence>
<evidence type="ECO:0000305" key="11"/>
<accession>O62699</accession>
<accession>O97604</accession>
<comment type="function">
    <text evidence="5 6">Produces nitric oxide (NO) which is a messenger molecule with diverse functions throughout the body. In macrophages, NO mediates tumoricidal and bactericidal actions. Also has nitrosylase activity and mediates cysteine S-nitrosylation of cytoplasmic target proteins such PTGS2/COX2. As component of the iNOS-S100A8/9 transnitrosylase complex involved in the selective inflammatory stimulus-dependent S-nitrosylation of GAPDH implicated in regulation of the GAIT complex activity and probably multiple targets including ANXA5, EZR, MSN and VIM. Involved in inflammation, enhances the synthesis of pro-inflammatory mediators such as IL6 and IL8.</text>
</comment>
<comment type="catalytic activity">
    <reaction evidence="5">
        <text>2 L-arginine + 3 NADPH + 4 O2 + H(+) = 2 L-citrulline + 2 nitric oxide + 3 NADP(+) + 4 H2O</text>
        <dbReference type="Rhea" id="RHEA:19897"/>
        <dbReference type="ChEBI" id="CHEBI:15377"/>
        <dbReference type="ChEBI" id="CHEBI:15378"/>
        <dbReference type="ChEBI" id="CHEBI:15379"/>
        <dbReference type="ChEBI" id="CHEBI:16480"/>
        <dbReference type="ChEBI" id="CHEBI:32682"/>
        <dbReference type="ChEBI" id="CHEBI:57743"/>
        <dbReference type="ChEBI" id="CHEBI:57783"/>
        <dbReference type="ChEBI" id="CHEBI:58349"/>
        <dbReference type="EC" id="1.14.13.39"/>
    </reaction>
    <physiologicalReaction direction="left-to-right" evidence="5">
        <dbReference type="Rhea" id="RHEA:19898"/>
    </physiologicalReaction>
</comment>
<comment type="cofactor">
    <cofactor evidence="5">
        <name>heme b</name>
        <dbReference type="ChEBI" id="CHEBI:60344"/>
    </cofactor>
</comment>
<comment type="cofactor">
    <cofactor evidence="3">
        <name>FAD</name>
        <dbReference type="ChEBI" id="CHEBI:57692"/>
    </cofactor>
    <text evidence="3">Binds 1 FAD.</text>
</comment>
<comment type="cofactor">
    <cofactor evidence="5">
        <name>FMN</name>
        <dbReference type="ChEBI" id="CHEBI:58210"/>
    </cofactor>
    <text evidence="5">Binds 1 FMN.</text>
</comment>
<comment type="cofactor">
    <cofactor evidence="5">
        <name>(6R)-L-erythro-5,6,7,8-tetrahydrobiopterin</name>
        <dbReference type="ChEBI" id="CHEBI:59560"/>
    </cofactor>
    <text evidence="5">Tetrahydrobiopterin (BH4). May stabilize the dimeric form of the enzyme.</text>
</comment>
<comment type="activity regulation">
    <text evidence="1">Regulated by calcium/calmodulin.</text>
</comment>
<comment type="subunit">
    <text evidence="4">Homodimer. Interacts with NHERF1. Interacts with GAPDH; induced by oxidatively-modified low-densitity lipoprotein (LDL(ox)). Interacts with S100A8 and S100A9 to form the iNOS-S100A8/9 transnitrosylase complex. Interacts with SPSB1, SPSB2 and SPSB4. Interacts with ELOC and CUL5 in the presence of SPSB1 or SPSB2 or SPSB4. Forms a complex with ASL, ASS1 and HSP90AA1; the complex regulates cell-autonomous L-arginine synthesis and citrulline recycling while channeling extracellular L-arginine to nitric oxide synthesis pathway.</text>
</comment>
<comment type="subcellular location">
    <subcellularLocation>
        <location evidence="5">Cytoplasm</location>
        <location evidence="5">Cytosol</location>
    </subcellularLocation>
    <text evidence="5">Localizes as discrete foci scattered throughout the cytosol and in the presence of SPSB1 and SPSB4, exhibits a more diffuse cytosolic localization.</text>
</comment>
<comment type="PTM">
    <text evidence="5">Polyubiquitinated; mediated by SPSB1, SPSB2 and SPSB4, leading to proteasomal degradation.</text>
</comment>
<comment type="similarity">
    <text evidence="11">Belongs to the NOS family.</text>
</comment>
<dbReference type="EC" id="1.14.13.39" evidence="5"/>
<dbReference type="EMBL" id="AF077821">
    <property type="protein sequence ID" value="AAC78630.1"/>
    <property type="molecule type" value="mRNA"/>
</dbReference>
<dbReference type="EMBL" id="AF032909">
    <property type="protein sequence ID" value="AAC15587.1"/>
    <property type="molecule type" value="mRNA"/>
</dbReference>
<dbReference type="RefSeq" id="NP_001300777.1">
    <property type="nucleotide sequence ID" value="NM_001313848.1"/>
</dbReference>
<dbReference type="SMR" id="O62699"/>
<dbReference type="FunCoup" id="O62699">
    <property type="interactions" value="107"/>
</dbReference>
<dbReference type="STRING" id="9615.ENSCAFP00000027512"/>
<dbReference type="PaxDb" id="9612-ENSCAFP00000027512"/>
<dbReference type="GeneID" id="403822"/>
<dbReference type="KEGG" id="cfa:403822"/>
<dbReference type="CTD" id="4843"/>
<dbReference type="eggNOG" id="KOG1158">
    <property type="taxonomic scope" value="Eukaryota"/>
</dbReference>
<dbReference type="InParanoid" id="O62699"/>
<dbReference type="OrthoDB" id="1688044at2759"/>
<dbReference type="Proteomes" id="UP000002254">
    <property type="component" value="Unplaced"/>
</dbReference>
<dbReference type="Proteomes" id="UP000694429">
    <property type="component" value="Unplaced"/>
</dbReference>
<dbReference type="Proteomes" id="UP000694542">
    <property type="component" value="Unplaced"/>
</dbReference>
<dbReference type="Proteomes" id="UP000805418">
    <property type="component" value="Unplaced"/>
</dbReference>
<dbReference type="GO" id="GO:0005829">
    <property type="term" value="C:cytosol"/>
    <property type="evidence" value="ECO:0000318"/>
    <property type="project" value="GO_Central"/>
</dbReference>
<dbReference type="GO" id="GO:0005634">
    <property type="term" value="C:nucleus"/>
    <property type="evidence" value="ECO:0000318"/>
    <property type="project" value="GO_Central"/>
</dbReference>
<dbReference type="GO" id="GO:0005886">
    <property type="term" value="C:plasma membrane"/>
    <property type="evidence" value="ECO:0000318"/>
    <property type="project" value="GO_Central"/>
</dbReference>
<dbReference type="GO" id="GO:0005516">
    <property type="term" value="F:calmodulin binding"/>
    <property type="evidence" value="ECO:0007669"/>
    <property type="project" value="UniProtKB-KW"/>
</dbReference>
<dbReference type="GO" id="GO:0050660">
    <property type="term" value="F:flavin adenine dinucleotide binding"/>
    <property type="evidence" value="ECO:0000318"/>
    <property type="project" value="GO_Central"/>
</dbReference>
<dbReference type="GO" id="GO:0010181">
    <property type="term" value="F:FMN binding"/>
    <property type="evidence" value="ECO:0000318"/>
    <property type="project" value="GO_Central"/>
</dbReference>
<dbReference type="GO" id="GO:0020037">
    <property type="term" value="F:heme binding"/>
    <property type="evidence" value="ECO:0007669"/>
    <property type="project" value="InterPro"/>
</dbReference>
<dbReference type="GO" id="GO:0046872">
    <property type="term" value="F:metal ion binding"/>
    <property type="evidence" value="ECO:0007669"/>
    <property type="project" value="UniProtKB-KW"/>
</dbReference>
<dbReference type="GO" id="GO:0050661">
    <property type="term" value="F:NADP binding"/>
    <property type="evidence" value="ECO:0007669"/>
    <property type="project" value="InterPro"/>
</dbReference>
<dbReference type="GO" id="GO:0004517">
    <property type="term" value="F:nitric-oxide synthase activity"/>
    <property type="evidence" value="ECO:0000250"/>
    <property type="project" value="UniProtKB"/>
</dbReference>
<dbReference type="GO" id="GO:0006527">
    <property type="term" value="P:arginine catabolic process"/>
    <property type="evidence" value="ECO:0000318"/>
    <property type="project" value="GO_Central"/>
</dbReference>
<dbReference type="GO" id="GO:0042742">
    <property type="term" value="P:defense response to bacterium"/>
    <property type="evidence" value="ECO:0000250"/>
    <property type="project" value="UniProtKB"/>
</dbReference>
<dbReference type="GO" id="GO:0006954">
    <property type="term" value="P:inflammatory response"/>
    <property type="evidence" value="ECO:0000318"/>
    <property type="project" value="GO_Central"/>
</dbReference>
<dbReference type="GO" id="GO:0045776">
    <property type="term" value="P:negative regulation of blood pressure"/>
    <property type="evidence" value="ECO:0000318"/>
    <property type="project" value="GO_Central"/>
</dbReference>
<dbReference type="GO" id="GO:0006809">
    <property type="term" value="P:nitric oxide biosynthetic process"/>
    <property type="evidence" value="ECO:0000318"/>
    <property type="project" value="GO_Central"/>
</dbReference>
<dbReference type="GO" id="GO:0007263">
    <property type="term" value="P:nitric oxide mediated signal transduction"/>
    <property type="evidence" value="ECO:0000318"/>
    <property type="project" value="GO_Central"/>
</dbReference>
<dbReference type="GO" id="GO:0018119">
    <property type="term" value="P:peptidyl-cysteine S-nitrosylation"/>
    <property type="evidence" value="ECO:0000250"/>
    <property type="project" value="UniProtKB"/>
</dbReference>
<dbReference type="GO" id="GO:0032755">
    <property type="term" value="P:positive regulation of interleukin-6 production"/>
    <property type="evidence" value="ECO:0000250"/>
    <property type="project" value="UniProtKB"/>
</dbReference>
<dbReference type="GO" id="GO:0032757">
    <property type="term" value="P:positive regulation of interleukin-8 production"/>
    <property type="evidence" value="ECO:0000250"/>
    <property type="project" value="UniProtKB"/>
</dbReference>
<dbReference type="GO" id="GO:0032310">
    <property type="term" value="P:prostaglandin secretion"/>
    <property type="evidence" value="ECO:0000250"/>
    <property type="project" value="UniProtKB"/>
</dbReference>
<dbReference type="GO" id="GO:1900015">
    <property type="term" value="P:regulation of cytokine production involved in inflammatory response"/>
    <property type="evidence" value="ECO:0000250"/>
    <property type="project" value="UniProtKB"/>
</dbReference>
<dbReference type="GO" id="GO:0009725">
    <property type="term" value="P:response to hormone"/>
    <property type="evidence" value="ECO:0000318"/>
    <property type="project" value="GO_Central"/>
</dbReference>
<dbReference type="GO" id="GO:0032496">
    <property type="term" value="P:response to lipopolysaccharide"/>
    <property type="evidence" value="ECO:0000318"/>
    <property type="project" value="GO_Central"/>
</dbReference>
<dbReference type="GO" id="GO:0006801">
    <property type="term" value="P:superoxide metabolic process"/>
    <property type="evidence" value="ECO:0000250"/>
    <property type="project" value="UniProtKB"/>
</dbReference>
<dbReference type="CDD" id="cd00795">
    <property type="entry name" value="NOS_oxygenase_euk"/>
    <property type="match status" value="1"/>
</dbReference>
<dbReference type="FunFam" id="1.20.990.10:FF:000006">
    <property type="entry name" value="Nitric oxide synthase"/>
    <property type="match status" value="1"/>
</dbReference>
<dbReference type="FunFam" id="3.40.50.360:FF:000039">
    <property type="entry name" value="Nitric oxide synthase"/>
    <property type="match status" value="1"/>
</dbReference>
<dbReference type="FunFam" id="3.40.50.80:FF:000003">
    <property type="entry name" value="Nitric oxide synthase"/>
    <property type="match status" value="1"/>
</dbReference>
<dbReference type="FunFam" id="3.90.1230.10:FF:000001">
    <property type="entry name" value="Nitric oxide synthase, brain"/>
    <property type="match status" value="1"/>
</dbReference>
<dbReference type="FunFam" id="3.90.440.10:FF:000005">
    <property type="entry name" value="Nitric oxide synthase, inducible"/>
    <property type="match status" value="1"/>
</dbReference>
<dbReference type="Gene3D" id="3.40.50.360">
    <property type="match status" value="2"/>
</dbReference>
<dbReference type="Gene3D" id="6.10.250.410">
    <property type="match status" value="1"/>
</dbReference>
<dbReference type="Gene3D" id="1.20.990.10">
    <property type="entry name" value="NADPH-cytochrome p450 Reductase, Chain A, domain 3"/>
    <property type="match status" value="1"/>
</dbReference>
<dbReference type="Gene3D" id="3.90.340.10">
    <property type="entry name" value="Nitric Oxide Synthase, Chain A, domain 1"/>
    <property type="match status" value="1"/>
</dbReference>
<dbReference type="Gene3D" id="3.90.1230.10">
    <property type="entry name" value="Nitric Oxide Synthase, Chain A, domain 3"/>
    <property type="match status" value="1"/>
</dbReference>
<dbReference type="Gene3D" id="3.90.440.10">
    <property type="entry name" value="Nitric Oxide Synthase,Heme Domain,Chain A domain 2"/>
    <property type="match status" value="1"/>
</dbReference>
<dbReference type="Gene3D" id="3.40.50.80">
    <property type="entry name" value="Nucleotide-binding domain of ferredoxin-NADP reductase (FNR) module"/>
    <property type="match status" value="1"/>
</dbReference>
<dbReference type="Gene3D" id="2.40.30.10">
    <property type="entry name" value="Translation factors"/>
    <property type="match status" value="1"/>
</dbReference>
<dbReference type="InterPro" id="IPR003097">
    <property type="entry name" value="CysJ-like_FAD-binding"/>
</dbReference>
<dbReference type="InterPro" id="IPR017927">
    <property type="entry name" value="FAD-bd_FR_type"/>
</dbReference>
<dbReference type="InterPro" id="IPR001094">
    <property type="entry name" value="Flavdoxin-like"/>
</dbReference>
<dbReference type="InterPro" id="IPR008254">
    <property type="entry name" value="Flavodoxin/NO_synth"/>
</dbReference>
<dbReference type="InterPro" id="IPR001709">
    <property type="entry name" value="Flavoprot_Pyr_Nucl_cyt_Rdtase"/>
</dbReference>
<dbReference type="InterPro" id="IPR029039">
    <property type="entry name" value="Flavoprotein-like_sf"/>
</dbReference>
<dbReference type="InterPro" id="IPR039261">
    <property type="entry name" value="FNR_nucleotide-bd"/>
</dbReference>
<dbReference type="InterPro" id="IPR023173">
    <property type="entry name" value="NADPH_Cyt_P450_Rdtase_alpha"/>
</dbReference>
<dbReference type="InterPro" id="IPR050607">
    <property type="entry name" value="NOS"/>
</dbReference>
<dbReference type="InterPro" id="IPR044943">
    <property type="entry name" value="NOS_dom_1"/>
</dbReference>
<dbReference type="InterPro" id="IPR044940">
    <property type="entry name" value="NOS_dom_2"/>
</dbReference>
<dbReference type="InterPro" id="IPR044944">
    <property type="entry name" value="NOS_dom_3"/>
</dbReference>
<dbReference type="InterPro" id="IPR012144">
    <property type="entry name" value="NOS_euk"/>
</dbReference>
<dbReference type="InterPro" id="IPR004030">
    <property type="entry name" value="NOS_N"/>
</dbReference>
<dbReference type="InterPro" id="IPR036119">
    <property type="entry name" value="NOS_N_sf"/>
</dbReference>
<dbReference type="InterPro" id="IPR001433">
    <property type="entry name" value="OxRdtase_FAD/NAD-bd"/>
</dbReference>
<dbReference type="InterPro" id="IPR017938">
    <property type="entry name" value="Riboflavin_synthase-like_b-brl"/>
</dbReference>
<dbReference type="PANTHER" id="PTHR43410:SF4">
    <property type="entry name" value="NITRIC OXIDE SYNTHASE"/>
    <property type="match status" value="1"/>
</dbReference>
<dbReference type="PANTHER" id="PTHR43410">
    <property type="entry name" value="NITRIC OXIDE SYNTHASE OXYGENASE"/>
    <property type="match status" value="1"/>
</dbReference>
<dbReference type="Pfam" id="PF00667">
    <property type="entry name" value="FAD_binding_1"/>
    <property type="match status" value="1"/>
</dbReference>
<dbReference type="Pfam" id="PF00258">
    <property type="entry name" value="Flavodoxin_1"/>
    <property type="match status" value="1"/>
</dbReference>
<dbReference type="Pfam" id="PF00175">
    <property type="entry name" value="NAD_binding_1"/>
    <property type="match status" value="1"/>
</dbReference>
<dbReference type="Pfam" id="PF02898">
    <property type="entry name" value="NO_synthase"/>
    <property type="match status" value="1"/>
</dbReference>
<dbReference type="PIRSF" id="PIRSF000333">
    <property type="entry name" value="NOS"/>
    <property type="match status" value="1"/>
</dbReference>
<dbReference type="PRINTS" id="PR00369">
    <property type="entry name" value="FLAVODOXIN"/>
</dbReference>
<dbReference type="PRINTS" id="PR00371">
    <property type="entry name" value="FPNCR"/>
</dbReference>
<dbReference type="SUPFAM" id="SSF52343">
    <property type="entry name" value="Ferredoxin reductase-like, C-terminal NADP-linked domain"/>
    <property type="match status" value="1"/>
</dbReference>
<dbReference type="SUPFAM" id="SSF52218">
    <property type="entry name" value="Flavoproteins"/>
    <property type="match status" value="1"/>
</dbReference>
<dbReference type="SUPFAM" id="SSF56512">
    <property type="entry name" value="Nitric oxide (NO) synthase oxygenase domain"/>
    <property type="match status" value="1"/>
</dbReference>
<dbReference type="SUPFAM" id="SSF63380">
    <property type="entry name" value="Riboflavin synthase domain-like"/>
    <property type="match status" value="1"/>
</dbReference>
<dbReference type="PROSITE" id="PS51384">
    <property type="entry name" value="FAD_FR"/>
    <property type="match status" value="1"/>
</dbReference>
<dbReference type="PROSITE" id="PS50902">
    <property type="entry name" value="FLAVODOXIN_LIKE"/>
    <property type="match status" value="1"/>
</dbReference>
<dbReference type="PROSITE" id="PS60001">
    <property type="entry name" value="NOS"/>
    <property type="match status" value="1"/>
</dbReference>
<protein>
    <recommendedName>
        <fullName>Nitric oxide synthase, inducible</fullName>
        <ecNumber evidence="5">1.14.13.39</ecNumber>
    </recommendedName>
    <alternativeName>
        <fullName>Inducible NO synthase</fullName>
        <shortName>Inducible NOS</shortName>
        <shortName>iNOS</shortName>
    </alternativeName>
    <alternativeName>
        <fullName>NOS type II</fullName>
    </alternativeName>
    <alternativeName>
        <fullName>Peptidyl-cysteine S-nitrosylase NOS2</fullName>
    </alternativeName>
</protein>